<comment type="function">
    <text evidence="1">Catalyzes the hydrolytic cleavage of the carbon-nitrogen bond in imidazolone-5-propanoate to yield N-formimidoyl-L-glutamate. It is the third step in the universal histidine degradation pathway.</text>
</comment>
<comment type="catalytic activity">
    <reaction evidence="1">
        <text>4-imidazolone-5-propanoate + H2O = N-formimidoyl-L-glutamate</text>
        <dbReference type="Rhea" id="RHEA:23660"/>
        <dbReference type="ChEBI" id="CHEBI:15377"/>
        <dbReference type="ChEBI" id="CHEBI:58928"/>
        <dbReference type="ChEBI" id="CHEBI:77893"/>
        <dbReference type="EC" id="3.5.2.7"/>
    </reaction>
</comment>
<comment type="cofactor">
    <cofactor evidence="1">
        <name>Zn(2+)</name>
        <dbReference type="ChEBI" id="CHEBI:29105"/>
    </cofactor>
    <cofactor evidence="1">
        <name>Fe(3+)</name>
        <dbReference type="ChEBI" id="CHEBI:29034"/>
    </cofactor>
    <text evidence="1">Binds 1 zinc or iron ion per subunit.</text>
</comment>
<comment type="pathway">
    <text evidence="1">Amino-acid degradation; L-histidine degradation into L-glutamate; N-formimidoyl-L-glutamate from L-histidine: step 3/3.</text>
</comment>
<comment type="subcellular location">
    <subcellularLocation>
        <location evidence="1">Cytoplasm</location>
    </subcellularLocation>
</comment>
<comment type="similarity">
    <text evidence="1">Belongs to the metallo-dependent hydrolases superfamily. HutI family.</text>
</comment>
<gene>
    <name evidence="1" type="primary">hutI</name>
    <name type="ordered locus">GWCH70_1283</name>
</gene>
<sequence>MRPLFIRNASQLVTLAGSSTAPLVKEKMNELHIIENGSVWVEDGKIAAVGTDEELSQQFQERIAEAEIVDATGKTVTPGLVDPHTHFVYAGSRESEFAMRLSGATYMEIMNAGGGIHATTKATREASKETLYEESKRRLDQFLLHGVTTVEAKSGYGLSIEHEVKQLTVAKQLDETHPVDVVSTFMGAHAVPAEWKDNPDGFVRVIVEEMIPKVSELGLAEFNDVFCERGVFTPEQARIILEAGKAYGLMPKIHADEIEPYGGAELAAEVGAVSADHLLRASDEGIRRMAEKGVIAVLLPGTAFFLMTKAANARKIIDAGAAVALSTDCNPGSSPTVSLPLIMNLGCLQMGMTPAEALAAVTINAAHAINRGHEIGSIEVGKKADLVLFDVPNYMQLIYHYGMNHTDTVVKNGRVVVKSGRLCY</sequence>
<dbReference type="EC" id="3.5.2.7" evidence="1"/>
<dbReference type="EMBL" id="CP001638">
    <property type="protein sequence ID" value="ACS24134.1"/>
    <property type="molecule type" value="Genomic_DNA"/>
</dbReference>
<dbReference type="SMR" id="C5DA20"/>
<dbReference type="STRING" id="471223.GWCH70_1283"/>
<dbReference type="KEGG" id="gwc:GWCH70_1283"/>
<dbReference type="eggNOG" id="COG1228">
    <property type="taxonomic scope" value="Bacteria"/>
</dbReference>
<dbReference type="HOGENOM" id="CLU_041647_0_1_9"/>
<dbReference type="OrthoDB" id="9776455at2"/>
<dbReference type="UniPathway" id="UPA00379">
    <property type="reaction ID" value="UER00551"/>
</dbReference>
<dbReference type="GO" id="GO:0005737">
    <property type="term" value="C:cytoplasm"/>
    <property type="evidence" value="ECO:0007669"/>
    <property type="project" value="UniProtKB-SubCell"/>
</dbReference>
<dbReference type="GO" id="GO:0050480">
    <property type="term" value="F:imidazolonepropionase activity"/>
    <property type="evidence" value="ECO:0007669"/>
    <property type="project" value="UniProtKB-UniRule"/>
</dbReference>
<dbReference type="GO" id="GO:0005506">
    <property type="term" value="F:iron ion binding"/>
    <property type="evidence" value="ECO:0007669"/>
    <property type="project" value="UniProtKB-UniRule"/>
</dbReference>
<dbReference type="GO" id="GO:0008270">
    <property type="term" value="F:zinc ion binding"/>
    <property type="evidence" value="ECO:0007669"/>
    <property type="project" value="UniProtKB-UniRule"/>
</dbReference>
<dbReference type="GO" id="GO:0019556">
    <property type="term" value="P:L-histidine catabolic process to glutamate and formamide"/>
    <property type="evidence" value="ECO:0007669"/>
    <property type="project" value="UniProtKB-UniPathway"/>
</dbReference>
<dbReference type="GO" id="GO:0019557">
    <property type="term" value="P:L-histidine catabolic process to glutamate and formate"/>
    <property type="evidence" value="ECO:0007669"/>
    <property type="project" value="UniProtKB-UniPathway"/>
</dbReference>
<dbReference type="CDD" id="cd01296">
    <property type="entry name" value="Imidazolone-5PH"/>
    <property type="match status" value="1"/>
</dbReference>
<dbReference type="FunFam" id="3.20.20.140:FF:000007">
    <property type="entry name" value="Imidazolonepropionase"/>
    <property type="match status" value="1"/>
</dbReference>
<dbReference type="Gene3D" id="3.20.20.140">
    <property type="entry name" value="Metal-dependent hydrolases"/>
    <property type="match status" value="1"/>
</dbReference>
<dbReference type="Gene3D" id="2.30.40.10">
    <property type="entry name" value="Urease, subunit C, domain 1"/>
    <property type="match status" value="1"/>
</dbReference>
<dbReference type="HAMAP" id="MF_00372">
    <property type="entry name" value="HutI"/>
    <property type="match status" value="1"/>
</dbReference>
<dbReference type="InterPro" id="IPR006680">
    <property type="entry name" value="Amidohydro-rel"/>
</dbReference>
<dbReference type="InterPro" id="IPR005920">
    <property type="entry name" value="HutI"/>
</dbReference>
<dbReference type="InterPro" id="IPR011059">
    <property type="entry name" value="Metal-dep_hydrolase_composite"/>
</dbReference>
<dbReference type="InterPro" id="IPR032466">
    <property type="entry name" value="Metal_Hydrolase"/>
</dbReference>
<dbReference type="NCBIfam" id="TIGR01224">
    <property type="entry name" value="hutI"/>
    <property type="match status" value="1"/>
</dbReference>
<dbReference type="PANTHER" id="PTHR42752">
    <property type="entry name" value="IMIDAZOLONEPROPIONASE"/>
    <property type="match status" value="1"/>
</dbReference>
<dbReference type="PANTHER" id="PTHR42752:SF1">
    <property type="entry name" value="IMIDAZOLONEPROPIONASE-RELATED"/>
    <property type="match status" value="1"/>
</dbReference>
<dbReference type="Pfam" id="PF01979">
    <property type="entry name" value="Amidohydro_1"/>
    <property type="match status" value="1"/>
</dbReference>
<dbReference type="SUPFAM" id="SSF51338">
    <property type="entry name" value="Composite domain of metallo-dependent hydrolases"/>
    <property type="match status" value="1"/>
</dbReference>
<dbReference type="SUPFAM" id="SSF51556">
    <property type="entry name" value="Metallo-dependent hydrolases"/>
    <property type="match status" value="1"/>
</dbReference>
<evidence type="ECO:0000255" key="1">
    <source>
        <dbReference type="HAMAP-Rule" id="MF_00372"/>
    </source>
</evidence>
<accession>C5DA20</accession>
<keyword id="KW-0963">Cytoplasm</keyword>
<keyword id="KW-0369">Histidine metabolism</keyword>
<keyword id="KW-0378">Hydrolase</keyword>
<keyword id="KW-0408">Iron</keyword>
<keyword id="KW-0479">Metal-binding</keyword>
<keyword id="KW-0862">Zinc</keyword>
<protein>
    <recommendedName>
        <fullName evidence="1">Imidazolonepropionase</fullName>
        <ecNumber evidence="1">3.5.2.7</ecNumber>
    </recommendedName>
    <alternativeName>
        <fullName evidence="1">Imidazolone-5-propionate hydrolase</fullName>
    </alternativeName>
</protein>
<reference key="1">
    <citation type="submission" date="2009-06" db="EMBL/GenBank/DDBJ databases">
        <title>Complete sequence of chromosome of Geopacillus sp. WCH70.</title>
        <authorList>
            <consortium name="US DOE Joint Genome Institute"/>
            <person name="Lucas S."/>
            <person name="Copeland A."/>
            <person name="Lapidus A."/>
            <person name="Glavina del Rio T."/>
            <person name="Dalin E."/>
            <person name="Tice H."/>
            <person name="Bruce D."/>
            <person name="Goodwin L."/>
            <person name="Pitluck S."/>
            <person name="Chertkov O."/>
            <person name="Brettin T."/>
            <person name="Detter J.C."/>
            <person name="Han C."/>
            <person name="Larimer F."/>
            <person name="Land M."/>
            <person name="Hauser L."/>
            <person name="Kyrpides N."/>
            <person name="Mikhailova N."/>
            <person name="Brumm P."/>
            <person name="Mead D.A."/>
            <person name="Richardson P."/>
        </authorList>
    </citation>
    <scope>NUCLEOTIDE SEQUENCE [LARGE SCALE GENOMIC DNA]</scope>
    <source>
        <strain>WCH70</strain>
    </source>
</reference>
<name>HUTI_GEOSW</name>
<feature type="chain" id="PRO_1000205583" description="Imidazolonepropionase">
    <location>
        <begin position="1"/>
        <end position="424"/>
    </location>
</feature>
<feature type="binding site" evidence="1">
    <location>
        <position position="84"/>
    </location>
    <ligand>
        <name>Fe(3+)</name>
        <dbReference type="ChEBI" id="CHEBI:29034"/>
    </ligand>
</feature>
<feature type="binding site" evidence="1">
    <location>
        <position position="84"/>
    </location>
    <ligand>
        <name>Zn(2+)</name>
        <dbReference type="ChEBI" id="CHEBI:29105"/>
    </ligand>
</feature>
<feature type="binding site" evidence="1">
    <location>
        <position position="86"/>
    </location>
    <ligand>
        <name>Fe(3+)</name>
        <dbReference type="ChEBI" id="CHEBI:29034"/>
    </ligand>
</feature>
<feature type="binding site" evidence="1">
    <location>
        <position position="86"/>
    </location>
    <ligand>
        <name>Zn(2+)</name>
        <dbReference type="ChEBI" id="CHEBI:29105"/>
    </ligand>
</feature>
<feature type="binding site" evidence="1">
    <location>
        <position position="93"/>
    </location>
    <ligand>
        <name>4-imidazolone-5-propanoate</name>
        <dbReference type="ChEBI" id="CHEBI:77893"/>
    </ligand>
</feature>
<feature type="binding site" evidence="1">
    <location>
        <position position="156"/>
    </location>
    <ligand>
        <name>4-imidazolone-5-propanoate</name>
        <dbReference type="ChEBI" id="CHEBI:77893"/>
    </ligand>
</feature>
<feature type="binding site" evidence="1">
    <location>
        <position position="156"/>
    </location>
    <ligand>
        <name>N-formimidoyl-L-glutamate</name>
        <dbReference type="ChEBI" id="CHEBI:58928"/>
    </ligand>
</feature>
<feature type="binding site" evidence="1">
    <location>
        <position position="189"/>
    </location>
    <ligand>
        <name>4-imidazolone-5-propanoate</name>
        <dbReference type="ChEBI" id="CHEBI:77893"/>
    </ligand>
</feature>
<feature type="binding site" evidence="1">
    <location>
        <position position="254"/>
    </location>
    <ligand>
        <name>Fe(3+)</name>
        <dbReference type="ChEBI" id="CHEBI:29034"/>
    </ligand>
</feature>
<feature type="binding site" evidence="1">
    <location>
        <position position="254"/>
    </location>
    <ligand>
        <name>Zn(2+)</name>
        <dbReference type="ChEBI" id="CHEBI:29105"/>
    </ligand>
</feature>
<feature type="binding site" evidence="1">
    <location>
        <position position="257"/>
    </location>
    <ligand>
        <name>4-imidazolone-5-propanoate</name>
        <dbReference type="ChEBI" id="CHEBI:77893"/>
    </ligand>
</feature>
<feature type="binding site" evidence="1">
    <location>
        <position position="328"/>
    </location>
    <ligand>
        <name>Fe(3+)</name>
        <dbReference type="ChEBI" id="CHEBI:29034"/>
    </ligand>
</feature>
<feature type="binding site" evidence="1">
    <location>
        <position position="328"/>
    </location>
    <ligand>
        <name>Zn(2+)</name>
        <dbReference type="ChEBI" id="CHEBI:29105"/>
    </ligand>
</feature>
<feature type="binding site" evidence="1">
    <location>
        <position position="330"/>
    </location>
    <ligand>
        <name>N-formimidoyl-L-glutamate</name>
        <dbReference type="ChEBI" id="CHEBI:58928"/>
    </ligand>
</feature>
<feature type="binding site" evidence="1">
    <location>
        <position position="332"/>
    </location>
    <ligand>
        <name>N-formimidoyl-L-glutamate</name>
        <dbReference type="ChEBI" id="CHEBI:58928"/>
    </ligand>
</feature>
<feature type="binding site" evidence="1">
    <location>
        <position position="333"/>
    </location>
    <ligand>
        <name>4-imidazolone-5-propanoate</name>
        <dbReference type="ChEBI" id="CHEBI:77893"/>
    </ligand>
</feature>
<organism>
    <name type="scientific">Geobacillus sp. (strain WCH70)</name>
    <dbReference type="NCBI Taxonomy" id="471223"/>
    <lineage>
        <taxon>Bacteria</taxon>
        <taxon>Bacillati</taxon>
        <taxon>Bacillota</taxon>
        <taxon>Bacilli</taxon>
        <taxon>Bacillales</taxon>
        <taxon>Anoxybacillaceae</taxon>
        <taxon>Geobacillus</taxon>
    </lineage>
</organism>
<proteinExistence type="inferred from homology"/>